<comment type="subcellular location">
    <subcellularLocation>
        <location evidence="2">Membrane</location>
        <topology evidence="2">Single-pass membrane protein</topology>
    </subcellularLocation>
</comment>
<comment type="similarity">
    <text evidence="2">Belongs to the membrane fusion protein (MFP) (TC 8.A.1) family.</text>
</comment>
<dbReference type="EMBL" id="AE000511">
    <property type="protein sequence ID" value="AAD08523.1"/>
    <property type="molecule type" value="Genomic_DNA"/>
</dbReference>
<dbReference type="EMBL" id="U86610">
    <property type="protein sequence ID" value="AAB81283.1"/>
    <property type="molecule type" value="Genomic_DNA"/>
</dbReference>
<dbReference type="PIR" id="H64705">
    <property type="entry name" value="H64705"/>
</dbReference>
<dbReference type="RefSeq" id="NP_208279.1">
    <property type="nucleotide sequence ID" value="NC_000915.1"/>
</dbReference>
<dbReference type="RefSeq" id="WP_000071821.1">
    <property type="nucleotide sequence ID" value="NC_018939.1"/>
</dbReference>
<dbReference type="SMR" id="P94851"/>
<dbReference type="DIP" id="DIP-3275N"/>
<dbReference type="FunCoup" id="P94851">
    <property type="interactions" value="125"/>
</dbReference>
<dbReference type="IntAct" id="P94851">
    <property type="interactions" value="4"/>
</dbReference>
<dbReference type="MINT" id="P94851"/>
<dbReference type="STRING" id="85962.HP_1488"/>
<dbReference type="TCDB" id="3.A.1.105.28">
    <property type="family name" value="the atp-binding cassette (abc) superfamily"/>
</dbReference>
<dbReference type="PaxDb" id="85962-C694_07705"/>
<dbReference type="EnsemblBacteria" id="AAD08523">
    <property type="protein sequence ID" value="AAD08523"/>
    <property type="gene ID" value="HP_1488"/>
</dbReference>
<dbReference type="KEGG" id="heo:C694_07705"/>
<dbReference type="KEGG" id="hpy:HP_1488"/>
<dbReference type="PATRIC" id="fig|85962.47.peg.1599"/>
<dbReference type="eggNOG" id="COG0845">
    <property type="taxonomic scope" value="Bacteria"/>
</dbReference>
<dbReference type="InParanoid" id="P94851"/>
<dbReference type="OrthoDB" id="9793801at2"/>
<dbReference type="PhylomeDB" id="P94851"/>
<dbReference type="Proteomes" id="UP000000429">
    <property type="component" value="Chromosome"/>
</dbReference>
<dbReference type="GO" id="GO:0016020">
    <property type="term" value="C:membrane"/>
    <property type="evidence" value="ECO:0007669"/>
    <property type="project" value="UniProtKB-SubCell"/>
</dbReference>
<dbReference type="Gene3D" id="2.40.30.170">
    <property type="match status" value="1"/>
</dbReference>
<dbReference type="Gene3D" id="2.40.50.100">
    <property type="match status" value="1"/>
</dbReference>
<dbReference type="InterPro" id="IPR032317">
    <property type="entry name" value="CusB_D23"/>
</dbReference>
<dbReference type="PANTHER" id="PTHR30438:SF1">
    <property type="entry name" value="36 KDA ANTIGEN"/>
    <property type="match status" value="1"/>
</dbReference>
<dbReference type="PANTHER" id="PTHR30438">
    <property type="entry name" value="36 KDA ANTIGEN-RELATED"/>
    <property type="match status" value="1"/>
</dbReference>
<dbReference type="Pfam" id="PF16576">
    <property type="entry name" value="HlyD_D23"/>
    <property type="match status" value="1"/>
</dbReference>
<dbReference type="SUPFAM" id="SSF111369">
    <property type="entry name" value="HlyD-like secretion proteins"/>
    <property type="match status" value="2"/>
</dbReference>
<dbReference type="SUPFAM" id="SSF56954">
    <property type="entry name" value="Outer membrane efflux proteins (OEP)"/>
    <property type="match status" value="1"/>
</dbReference>
<accession>P94851</accession>
<protein>
    <recommendedName>
        <fullName>36 kDa antigen</fullName>
    </recommendedName>
</protein>
<feature type="chain" id="PRO_0000201861" description="36 kDa antigen">
    <location>
        <begin position="1"/>
        <end position="329"/>
    </location>
</feature>
<feature type="transmembrane region" description="Helical" evidence="1">
    <location>
        <begin position="11"/>
        <end position="31"/>
    </location>
</feature>
<feature type="sequence variant" description="In strain: Hp921023.">
    <original>H</original>
    <variation>R</variation>
    <location>
        <position position="67"/>
    </location>
</feature>
<feature type="sequence variant" description="In strain: Hp921023.">
    <original>E</original>
    <variation>D</variation>
    <location>
        <position position="256"/>
    </location>
</feature>
<feature type="sequence variant" description="In strain: Hp921023.">
    <original>K</original>
    <variation>R</variation>
    <location>
        <position position="272"/>
    </location>
</feature>
<feature type="sequence variant" description="In strain: Hp921023.">
    <original>T</original>
    <variation>A</variation>
    <location>
        <position position="274"/>
    </location>
</feature>
<keyword id="KW-0472">Membrane</keyword>
<keyword id="KW-1185">Reference proteome</keyword>
<keyword id="KW-0812">Transmembrane</keyword>
<keyword id="KW-1133">Transmembrane helix</keyword>
<proteinExistence type="inferred from homology"/>
<evidence type="ECO:0000255" key="1"/>
<evidence type="ECO:0000305" key="2"/>
<organism>
    <name type="scientific">Helicobacter pylori (strain ATCC 700392 / 26695)</name>
    <name type="common">Campylobacter pylori</name>
    <dbReference type="NCBI Taxonomy" id="85962"/>
    <lineage>
        <taxon>Bacteria</taxon>
        <taxon>Pseudomonadati</taxon>
        <taxon>Campylobacterota</taxon>
        <taxon>Epsilonproteobacteria</taxon>
        <taxon>Campylobacterales</taxon>
        <taxon>Helicobacteraceae</taxon>
        <taxon>Helicobacter</taxon>
    </lineage>
</organism>
<sequence length="329" mass="36199">MSNSMLDKNKAILTGGGALLLGLIVLFYLAYRPKAEVLQGFLEAREYSVSSKVPGRIEKVFVKKGDHIKKGDLVFSISSPELEAKLAQAEAGHKAAKALSDEVKRGSRDETINSARDVWQAAKSQATLAKETYKRVQDLYDNGVASLQKRDEAYAAYESTKYNESAAYQKYKMALGGASSESKIAAKAKESAALGQVNEVESYLKDVKATAPIDGEVSNVLLSGGELSPKGFPVVLMIDLKDSWLKISVPEKYLNEFKVGKEFEGYIPALKKSTKFRVKYLSVMGDFATWKATNNSNTYDMKSYEVEAIPLEELENFRVGMSVLVTIKP</sequence>
<reference key="1">
    <citation type="submission" date="1997-02" db="EMBL/GenBank/DDBJ databases">
        <authorList>
            <person name="Hocking D."/>
            <person name="Rothel L."/>
            <person name="Doidge C."/>
            <person name="Radcliff F."/>
            <person name="Lee A."/>
            <person name="Webb E."/>
        </authorList>
    </citation>
    <scope>NUCLEOTIDE SEQUENCE [GENOMIC DNA]</scope>
    <source>
        <strain>Hp921023</strain>
    </source>
</reference>
<reference key="2">
    <citation type="journal article" date="1997" name="Nature">
        <title>The complete genome sequence of the gastric pathogen Helicobacter pylori.</title>
        <authorList>
            <person name="Tomb J.-F."/>
            <person name="White O."/>
            <person name="Kerlavage A.R."/>
            <person name="Clayton R.A."/>
            <person name="Sutton G.G."/>
            <person name="Fleischmann R.D."/>
            <person name="Ketchum K.A."/>
            <person name="Klenk H.-P."/>
            <person name="Gill S.R."/>
            <person name="Dougherty B.A."/>
            <person name="Nelson K.E."/>
            <person name="Quackenbush J."/>
            <person name="Zhou L."/>
            <person name="Kirkness E.F."/>
            <person name="Peterson S.N."/>
            <person name="Loftus B.J."/>
            <person name="Richardson D.L."/>
            <person name="Dodson R.J."/>
            <person name="Khalak H.G."/>
            <person name="Glodek A."/>
            <person name="McKenney K."/>
            <person name="FitzGerald L.M."/>
            <person name="Lee N."/>
            <person name="Adams M.D."/>
            <person name="Hickey E.K."/>
            <person name="Berg D.E."/>
            <person name="Gocayne J.D."/>
            <person name="Utterback T.R."/>
            <person name="Peterson J.D."/>
            <person name="Kelley J.M."/>
            <person name="Cotton M.D."/>
            <person name="Weidman J.F."/>
            <person name="Fujii C."/>
            <person name="Bowman C."/>
            <person name="Watthey L."/>
            <person name="Wallin E."/>
            <person name="Hayes W.S."/>
            <person name="Borodovsky M."/>
            <person name="Karp P.D."/>
            <person name="Smith H.O."/>
            <person name="Fraser C.M."/>
            <person name="Venter J.C."/>
        </authorList>
    </citation>
    <scope>NUCLEOTIDE SEQUENCE [LARGE SCALE GENOMIC DNA]</scope>
    <source>
        <strain>ATCC 700392 / 26695</strain>
    </source>
</reference>
<name>AN36_HELPY</name>
<gene>
    <name type="ordered locus">HP_1488</name>
</gene>